<comment type="subcellular location">
    <subcellularLocation>
        <location evidence="1">Cytoplasm</location>
    </subcellularLocation>
</comment>
<comment type="similarity">
    <text evidence="1">Belongs to the UPF0298 family.</text>
</comment>
<name>Y288_STRP3</name>
<proteinExistence type="inferred from homology"/>
<dbReference type="EMBL" id="AE014074">
    <property type="protein sequence ID" value="AAM78895.1"/>
    <property type="molecule type" value="Genomic_DNA"/>
</dbReference>
<dbReference type="RefSeq" id="WP_002985847.1">
    <property type="nucleotide sequence ID" value="NC_004070.1"/>
</dbReference>
<dbReference type="SMR" id="P0DH02"/>
<dbReference type="KEGG" id="spg:SpyM3_0288"/>
<dbReference type="HOGENOM" id="CLU_159890_1_0_9"/>
<dbReference type="Proteomes" id="UP000000564">
    <property type="component" value="Chromosome"/>
</dbReference>
<dbReference type="GO" id="GO:0005737">
    <property type="term" value="C:cytoplasm"/>
    <property type="evidence" value="ECO:0007669"/>
    <property type="project" value="UniProtKB-SubCell"/>
</dbReference>
<dbReference type="HAMAP" id="MF_01126">
    <property type="entry name" value="UPF0298"/>
    <property type="match status" value="1"/>
</dbReference>
<dbReference type="InterPro" id="IPR016979">
    <property type="entry name" value="DUF2129"/>
</dbReference>
<dbReference type="NCBIfam" id="NF002631">
    <property type="entry name" value="PRK02302.1"/>
    <property type="match status" value="1"/>
</dbReference>
<dbReference type="Pfam" id="PF09902">
    <property type="entry name" value="DUF2129"/>
    <property type="match status" value="1"/>
</dbReference>
<dbReference type="PIRSF" id="PIRSF031653">
    <property type="entry name" value="UCP031653"/>
    <property type="match status" value="1"/>
</dbReference>
<reference key="1">
    <citation type="journal article" date="2002" name="Proc. Natl. Acad. Sci. U.S.A.">
        <title>Genome sequence of a serotype M3 strain of group A Streptococcus: phage-encoded toxins, the high-virulence phenotype, and clone emergence.</title>
        <authorList>
            <person name="Beres S.B."/>
            <person name="Sylva G.L."/>
            <person name="Barbian K.D."/>
            <person name="Lei B."/>
            <person name="Hoff J.S."/>
            <person name="Mammarella N.D."/>
            <person name="Liu M.-Y."/>
            <person name="Smoot J.C."/>
            <person name="Porcella S.F."/>
            <person name="Parkins L.D."/>
            <person name="Campbell D.S."/>
            <person name="Smith T.M."/>
            <person name="McCormick J.K."/>
            <person name="Leung D.Y.M."/>
            <person name="Schlievert P.M."/>
            <person name="Musser J.M."/>
        </authorList>
    </citation>
    <scope>NUCLEOTIDE SEQUENCE [LARGE SCALE GENOMIC DNA]</scope>
    <source>
        <strain>ATCC BAA-595 / MGAS315</strain>
    </source>
</reference>
<feature type="chain" id="PRO_0000074681" description="UPF0298 protein SpyM3_0288">
    <location>
        <begin position="1"/>
        <end position="91"/>
    </location>
</feature>
<gene>
    <name type="ordered locus">SpyM3_0288</name>
</gene>
<sequence length="91" mass="11103">MFQKQERIGLVVYLYYNRDARKLSKFGDLYYHSKRSRYLIIYINKNDLDTKLEEMRRLKCVKDIRPSAFDDIDRQFVGNLHRDETNNHQKG</sequence>
<protein>
    <recommendedName>
        <fullName evidence="1">UPF0298 protein SpyM3_0288</fullName>
    </recommendedName>
</protein>
<organism>
    <name type="scientific">Streptococcus pyogenes serotype M3 (strain ATCC BAA-595 / MGAS315)</name>
    <dbReference type="NCBI Taxonomy" id="198466"/>
    <lineage>
        <taxon>Bacteria</taxon>
        <taxon>Bacillati</taxon>
        <taxon>Bacillota</taxon>
        <taxon>Bacilli</taxon>
        <taxon>Lactobacillales</taxon>
        <taxon>Streptococcaceae</taxon>
        <taxon>Streptococcus</taxon>
    </lineage>
</organism>
<evidence type="ECO:0000255" key="1">
    <source>
        <dbReference type="HAMAP-Rule" id="MF_01126"/>
    </source>
</evidence>
<accession>P0DH02</accession>
<accession>P60421</accession>
<accession>Q9A191</accession>
<keyword id="KW-0963">Cytoplasm</keyword>